<sequence length="344" mass="39838">MANYTLAPEDEYDVLIEGELESDEAEQCDRYDTWALSAQLVPSLCSAVFVVGVLDNLLVVLILVKYKGLKRVENIYLLNLAVSNLCFLLTLPFWAHAGGDPMCKILIGLYFVGLYSETFFNCLLTLQRYLVFLHKGNFFSVRRRVPCGIVTSAVAWVTAILATVPEFAVYKPQMEDPKYKCAFSRTPFLPADETFWKHFLTLKMNVSVLVFPLFIFTFLYVQMRKTLRFGEQRYSLFKLVFAIMVVFLLMWAPYNIALFLSTFKEHFSLSDCKSNYNLDKSVLITKLIATTHCCVNPLLYVFLDGTFRKYLCRFFHRRSNTPRQPRRRFAQGTSREEPDRSTEV</sequence>
<dbReference type="EMBL" id="AF124381">
    <property type="protein sequence ID" value="AAD31420.1"/>
    <property type="molecule type" value="Genomic_DNA"/>
</dbReference>
<dbReference type="SMR" id="Q9XSD7"/>
<dbReference type="FunCoup" id="Q9XSD7">
    <property type="interactions" value="346"/>
</dbReference>
<dbReference type="STRING" id="9544.ENSMMUP00000065083"/>
<dbReference type="GlyCosmos" id="Q9XSD7">
    <property type="glycosylation" value="1 site, No reported glycans"/>
</dbReference>
<dbReference type="PaxDb" id="9544-ENSMMUP00000018726"/>
<dbReference type="eggNOG" id="KOG3656">
    <property type="taxonomic scope" value="Eukaryota"/>
</dbReference>
<dbReference type="InParanoid" id="Q9XSD7"/>
<dbReference type="Proteomes" id="UP000006718">
    <property type="component" value="Unassembled WGS sequence"/>
</dbReference>
<dbReference type="GO" id="GO:0005737">
    <property type="term" value="C:cytoplasm"/>
    <property type="evidence" value="ECO:0000318"/>
    <property type="project" value="GO_Central"/>
</dbReference>
<dbReference type="GO" id="GO:0009897">
    <property type="term" value="C:external side of plasma membrane"/>
    <property type="evidence" value="ECO:0000318"/>
    <property type="project" value="GO_Central"/>
</dbReference>
<dbReference type="GO" id="GO:0005886">
    <property type="term" value="C:plasma membrane"/>
    <property type="evidence" value="ECO:0000250"/>
    <property type="project" value="UniProtKB"/>
</dbReference>
<dbReference type="GO" id="GO:0019957">
    <property type="term" value="F:C-C chemokine binding"/>
    <property type="evidence" value="ECO:0000318"/>
    <property type="project" value="GO_Central"/>
</dbReference>
<dbReference type="GO" id="GO:0016493">
    <property type="term" value="F:C-C chemokine receptor activity"/>
    <property type="evidence" value="ECO:0000318"/>
    <property type="project" value="GO_Central"/>
</dbReference>
<dbReference type="GO" id="GO:0019722">
    <property type="term" value="P:calcium-mediated signaling"/>
    <property type="evidence" value="ECO:0000318"/>
    <property type="project" value="GO_Central"/>
</dbReference>
<dbReference type="GO" id="GO:0060326">
    <property type="term" value="P:cell chemotaxis"/>
    <property type="evidence" value="ECO:0000318"/>
    <property type="project" value="GO_Central"/>
</dbReference>
<dbReference type="GO" id="GO:0006955">
    <property type="term" value="P:immune response"/>
    <property type="evidence" value="ECO:0000318"/>
    <property type="project" value="GO_Central"/>
</dbReference>
<dbReference type="GO" id="GO:0006954">
    <property type="term" value="P:inflammatory response"/>
    <property type="evidence" value="ECO:0000250"/>
    <property type="project" value="UniProtKB"/>
</dbReference>
<dbReference type="GO" id="GO:0007204">
    <property type="term" value="P:positive regulation of cytosolic calcium ion concentration"/>
    <property type="evidence" value="ECO:0000318"/>
    <property type="project" value="GO_Central"/>
</dbReference>
<dbReference type="CDD" id="cd15171">
    <property type="entry name" value="7tmA_CCRL2"/>
    <property type="match status" value="1"/>
</dbReference>
<dbReference type="FunFam" id="1.20.1070.10:FF:000130">
    <property type="entry name" value="Chemokine (C-C motif) receptor 2"/>
    <property type="match status" value="1"/>
</dbReference>
<dbReference type="Gene3D" id="1.20.1070.10">
    <property type="entry name" value="Rhodopsin 7-helix transmembrane proteins"/>
    <property type="match status" value="1"/>
</dbReference>
<dbReference type="InterPro" id="IPR050119">
    <property type="entry name" value="CCR1-9-like"/>
</dbReference>
<dbReference type="InterPro" id="IPR000355">
    <property type="entry name" value="Chemokine_rcpt"/>
</dbReference>
<dbReference type="InterPro" id="IPR000276">
    <property type="entry name" value="GPCR_Rhodpsn"/>
</dbReference>
<dbReference type="InterPro" id="IPR017452">
    <property type="entry name" value="GPCR_Rhodpsn_7TM"/>
</dbReference>
<dbReference type="PANTHER" id="PTHR10489:SF655">
    <property type="entry name" value="C-C CHEMOKINE RECEPTOR-LIKE 2"/>
    <property type="match status" value="1"/>
</dbReference>
<dbReference type="PANTHER" id="PTHR10489">
    <property type="entry name" value="CELL ADHESION MOLECULE"/>
    <property type="match status" value="1"/>
</dbReference>
<dbReference type="Pfam" id="PF00001">
    <property type="entry name" value="7tm_1"/>
    <property type="match status" value="1"/>
</dbReference>
<dbReference type="PRINTS" id="PR00657">
    <property type="entry name" value="CCCHEMOKINER"/>
</dbReference>
<dbReference type="PRINTS" id="PR00237">
    <property type="entry name" value="GPCRRHODOPSN"/>
</dbReference>
<dbReference type="SUPFAM" id="SSF81321">
    <property type="entry name" value="Family A G protein-coupled receptor-like"/>
    <property type="match status" value="1"/>
</dbReference>
<dbReference type="PROSITE" id="PS50262">
    <property type="entry name" value="G_PROTEIN_RECEP_F1_2"/>
    <property type="match status" value="1"/>
</dbReference>
<organism>
    <name type="scientific">Macaca mulatta</name>
    <name type="common">Rhesus macaque</name>
    <dbReference type="NCBI Taxonomy" id="9544"/>
    <lineage>
        <taxon>Eukaryota</taxon>
        <taxon>Metazoa</taxon>
        <taxon>Chordata</taxon>
        <taxon>Craniata</taxon>
        <taxon>Vertebrata</taxon>
        <taxon>Euteleostomi</taxon>
        <taxon>Mammalia</taxon>
        <taxon>Eutheria</taxon>
        <taxon>Euarchontoglires</taxon>
        <taxon>Primates</taxon>
        <taxon>Haplorrhini</taxon>
        <taxon>Catarrhini</taxon>
        <taxon>Cercopithecidae</taxon>
        <taxon>Cercopithecinae</taxon>
        <taxon>Macaca</taxon>
    </lineage>
</organism>
<keyword id="KW-1003">Cell membrane</keyword>
<keyword id="KW-1015">Disulfide bond</keyword>
<keyword id="KW-0297">G-protein coupled receptor</keyword>
<keyword id="KW-0325">Glycoprotein</keyword>
<keyword id="KW-0472">Membrane</keyword>
<keyword id="KW-0675">Receptor</keyword>
<keyword id="KW-1185">Reference proteome</keyword>
<keyword id="KW-0807">Transducer</keyword>
<keyword id="KW-0812">Transmembrane</keyword>
<keyword id="KW-1133">Transmembrane helix</keyword>
<evidence type="ECO:0000250" key="1"/>
<evidence type="ECO:0000255" key="2"/>
<evidence type="ECO:0000255" key="3">
    <source>
        <dbReference type="PROSITE-ProRule" id="PRU00521"/>
    </source>
</evidence>
<evidence type="ECO:0000256" key="4">
    <source>
        <dbReference type="SAM" id="MobiDB-lite"/>
    </source>
</evidence>
<reference key="1">
    <citation type="journal article" date="2001" name="AIDS Res. Hum. Retroviruses">
        <title>Identification and comparison of eleven rhesus macaque chemokine receptors.</title>
        <authorList>
            <person name="Margulies B.J."/>
            <person name="Hauer D.A."/>
            <person name="Clements J.E."/>
        </authorList>
    </citation>
    <scope>NUCLEOTIDE SEQUENCE [GENOMIC DNA]</scope>
</reference>
<gene>
    <name type="primary">CCRL2</name>
</gene>
<comment type="function">
    <text evidence="1">Receptor for CCL19 and chemerin/RARRES2. Does not appear to be a signaling receptor, but may have a role in modulating chemokine-triggered immune responses by capturing and internalizing CCL19 or by presenting RARRES2 ligand to CMKLR1, a functional signaling receptor. Plays a critical role for the development of Th2 responses (By similarity).</text>
</comment>
<comment type="subcellular location">
    <subcellularLocation>
        <location evidence="1">Cell membrane</location>
        <topology evidence="1">Multi-pass membrane protein</topology>
    </subcellularLocation>
</comment>
<comment type="domain">
    <text evidence="1">Lacks the conserved DRYLAIV motif in the second intracellular loop that is required for signaling of functional chemokine receptors.</text>
</comment>
<comment type="similarity">
    <text evidence="3">Belongs to the G-protein coupled receptor 1 family.</text>
</comment>
<accession>Q9XSD7</accession>
<feature type="chain" id="PRO_0000236799" description="C-C chemokine receptor-like 2">
    <location>
        <begin position="1"/>
        <end position="344"/>
    </location>
</feature>
<feature type="topological domain" description="Extracellular" evidence="2">
    <location>
        <begin position="1"/>
        <end position="43"/>
    </location>
</feature>
<feature type="transmembrane region" description="Helical; Name=1" evidence="2">
    <location>
        <begin position="44"/>
        <end position="64"/>
    </location>
</feature>
<feature type="topological domain" description="Cytoplasmic" evidence="2">
    <location>
        <begin position="65"/>
        <end position="74"/>
    </location>
</feature>
<feature type="transmembrane region" description="Helical; Name=2" evidence="2">
    <location>
        <begin position="75"/>
        <end position="95"/>
    </location>
</feature>
<feature type="topological domain" description="Extracellular" evidence="2">
    <location>
        <begin position="96"/>
        <end position="104"/>
    </location>
</feature>
<feature type="transmembrane region" description="Helical; Name=3" evidence="2">
    <location>
        <begin position="105"/>
        <end position="125"/>
    </location>
</feature>
<feature type="topological domain" description="Cytoplasmic" evidence="2">
    <location>
        <begin position="126"/>
        <end position="148"/>
    </location>
</feature>
<feature type="transmembrane region" description="Helical; Name=4" evidence="2">
    <location>
        <begin position="149"/>
        <end position="169"/>
    </location>
</feature>
<feature type="topological domain" description="Extracellular" evidence="2">
    <location>
        <begin position="170"/>
        <end position="198"/>
    </location>
</feature>
<feature type="transmembrane region" description="Helical; Name=5" evidence="2">
    <location>
        <begin position="199"/>
        <end position="219"/>
    </location>
</feature>
<feature type="topological domain" description="Cytoplasmic" evidence="2">
    <location>
        <begin position="220"/>
        <end position="238"/>
    </location>
</feature>
<feature type="transmembrane region" description="Helical; Name=6" evidence="2">
    <location>
        <begin position="239"/>
        <end position="259"/>
    </location>
</feature>
<feature type="topological domain" description="Extracellular" evidence="2">
    <location>
        <begin position="260"/>
        <end position="281"/>
    </location>
</feature>
<feature type="transmembrane region" description="Helical; Name=7" evidence="2">
    <location>
        <begin position="282"/>
        <end position="302"/>
    </location>
</feature>
<feature type="topological domain" description="Cytoplasmic" evidence="2">
    <location>
        <begin position="303"/>
        <end position="344"/>
    </location>
</feature>
<feature type="region of interest" description="Disordered" evidence="4">
    <location>
        <begin position="323"/>
        <end position="344"/>
    </location>
</feature>
<feature type="compositionally biased region" description="Basic and acidic residues" evidence="4">
    <location>
        <begin position="334"/>
        <end position="344"/>
    </location>
</feature>
<feature type="glycosylation site" description="N-linked (GlcNAc...) asparagine" evidence="2">
    <location>
        <position position="3"/>
    </location>
</feature>
<feature type="disulfide bond" evidence="3">
    <location>
        <begin position="103"/>
        <end position="181"/>
    </location>
</feature>
<name>CCRL2_MACMU</name>
<protein>
    <recommendedName>
        <fullName>C-C chemokine receptor-like 2</fullName>
    </recommendedName>
</protein>
<proteinExistence type="inferred from homology"/>